<name>RS13_SHIF8</name>
<proteinExistence type="inferred from homology"/>
<comment type="function">
    <text evidence="1">Located at the top of the head of the 30S subunit, it contacts several helices of the 16S rRNA. In the 70S ribosome it contacts the 23S rRNA (bridge B1a) and protein L5 of the 50S subunit (bridge B1b), connecting the 2 subunits; these bridges are implicated in subunit movement. Contacts the tRNAs in the A and P-sites.</text>
</comment>
<comment type="subunit">
    <text evidence="1">Part of the 30S ribosomal subunit. Forms a loose heterodimer with protein S19. Forms two bridges to the 50S subunit in the 70S ribosome.</text>
</comment>
<comment type="similarity">
    <text evidence="1">Belongs to the universal ribosomal protein uS13 family.</text>
</comment>
<reference key="1">
    <citation type="journal article" date="2006" name="BMC Genomics">
        <title>Complete genome sequence of Shigella flexneri 5b and comparison with Shigella flexneri 2a.</title>
        <authorList>
            <person name="Nie H."/>
            <person name="Yang F."/>
            <person name="Zhang X."/>
            <person name="Yang J."/>
            <person name="Chen L."/>
            <person name="Wang J."/>
            <person name="Xiong Z."/>
            <person name="Peng J."/>
            <person name="Sun L."/>
            <person name="Dong J."/>
            <person name="Xue Y."/>
            <person name="Xu X."/>
            <person name="Chen S."/>
            <person name="Yao Z."/>
            <person name="Shen Y."/>
            <person name="Jin Q."/>
        </authorList>
    </citation>
    <scope>NUCLEOTIDE SEQUENCE [LARGE SCALE GENOMIC DNA]</scope>
    <source>
        <strain>8401</strain>
    </source>
</reference>
<organism>
    <name type="scientific">Shigella flexneri serotype 5b (strain 8401)</name>
    <dbReference type="NCBI Taxonomy" id="373384"/>
    <lineage>
        <taxon>Bacteria</taxon>
        <taxon>Pseudomonadati</taxon>
        <taxon>Pseudomonadota</taxon>
        <taxon>Gammaproteobacteria</taxon>
        <taxon>Enterobacterales</taxon>
        <taxon>Enterobacteriaceae</taxon>
        <taxon>Shigella</taxon>
    </lineage>
</organism>
<gene>
    <name evidence="1" type="primary">rpsM</name>
    <name type="ordered locus">SFV_3318</name>
</gene>
<keyword id="KW-0687">Ribonucleoprotein</keyword>
<keyword id="KW-0689">Ribosomal protein</keyword>
<keyword id="KW-0694">RNA-binding</keyword>
<keyword id="KW-0699">rRNA-binding</keyword>
<keyword id="KW-0820">tRNA-binding</keyword>
<accession>Q0T004</accession>
<protein>
    <recommendedName>
        <fullName evidence="1">Small ribosomal subunit protein uS13</fullName>
    </recommendedName>
    <alternativeName>
        <fullName evidence="3">30S ribosomal protein S13</fullName>
    </alternativeName>
</protein>
<feature type="chain" id="PRO_0000306710" description="Small ribosomal subunit protein uS13">
    <location>
        <begin position="1"/>
        <end position="118"/>
    </location>
</feature>
<feature type="region of interest" description="Disordered" evidence="2">
    <location>
        <begin position="94"/>
        <end position="118"/>
    </location>
</feature>
<dbReference type="EMBL" id="CP000266">
    <property type="protein sequence ID" value="ABF05361.1"/>
    <property type="molecule type" value="Genomic_DNA"/>
</dbReference>
<dbReference type="RefSeq" id="WP_000090775.1">
    <property type="nucleotide sequence ID" value="NC_008258.1"/>
</dbReference>
<dbReference type="SMR" id="Q0T004"/>
<dbReference type="GeneID" id="93778689"/>
<dbReference type="KEGG" id="sfv:SFV_3318"/>
<dbReference type="HOGENOM" id="CLU_103849_1_2_6"/>
<dbReference type="Proteomes" id="UP000000659">
    <property type="component" value="Chromosome"/>
</dbReference>
<dbReference type="GO" id="GO:0005829">
    <property type="term" value="C:cytosol"/>
    <property type="evidence" value="ECO:0007669"/>
    <property type="project" value="TreeGrafter"/>
</dbReference>
<dbReference type="GO" id="GO:0015935">
    <property type="term" value="C:small ribosomal subunit"/>
    <property type="evidence" value="ECO:0007669"/>
    <property type="project" value="TreeGrafter"/>
</dbReference>
<dbReference type="GO" id="GO:0019843">
    <property type="term" value="F:rRNA binding"/>
    <property type="evidence" value="ECO:0007669"/>
    <property type="project" value="UniProtKB-UniRule"/>
</dbReference>
<dbReference type="GO" id="GO:0003735">
    <property type="term" value="F:structural constituent of ribosome"/>
    <property type="evidence" value="ECO:0007669"/>
    <property type="project" value="InterPro"/>
</dbReference>
<dbReference type="GO" id="GO:0000049">
    <property type="term" value="F:tRNA binding"/>
    <property type="evidence" value="ECO:0007669"/>
    <property type="project" value="UniProtKB-UniRule"/>
</dbReference>
<dbReference type="GO" id="GO:0006412">
    <property type="term" value="P:translation"/>
    <property type="evidence" value="ECO:0007669"/>
    <property type="project" value="UniProtKB-UniRule"/>
</dbReference>
<dbReference type="FunFam" id="1.10.8.50:FF:000001">
    <property type="entry name" value="30S ribosomal protein S13"/>
    <property type="match status" value="1"/>
</dbReference>
<dbReference type="FunFam" id="4.10.910.10:FF:000001">
    <property type="entry name" value="30S ribosomal protein S13"/>
    <property type="match status" value="1"/>
</dbReference>
<dbReference type="Gene3D" id="1.10.8.50">
    <property type="match status" value="1"/>
</dbReference>
<dbReference type="Gene3D" id="4.10.910.10">
    <property type="entry name" value="30s ribosomal protein s13, domain 2"/>
    <property type="match status" value="1"/>
</dbReference>
<dbReference type="HAMAP" id="MF_01315">
    <property type="entry name" value="Ribosomal_uS13"/>
    <property type="match status" value="1"/>
</dbReference>
<dbReference type="InterPro" id="IPR027437">
    <property type="entry name" value="Rbsml_uS13_C"/>
</dbReference>
<dbReference type="InterPro" id="IPR001892">
    <property type="entry name" value="Ribosomal_uS13"/>
</dbReference>
<dbReference type="InterPro" id="IPR010979">
    <property type="entry name" value="Ribosomal_uS13-like_H2TH"/>
</dbReference>
<dbReference type="InterPro" id="IPR019980">
    <property type="entry name" value="Ribosomal_uS13_bac-type"/>
</dbReference>
<dbReference type="InterPro" id="IPR018269">
    <property type="entry name" value="Ribosomal_uS13_CS"/>
</dbReference>
<dbReference type="NCBIfam" id="TIGR03631">
    <property type="entry name" value="uS13_bact"/>
    <property type="match status" value="1"/>
</dbReference>
<dbReference type="PANTHER" id="PTHR10871">
    <property type="entry name" value="30S RIBOSOMAL PROTEIN S13/40S RIBOSOMAL PROTEIN S18"/>
    <property type="match status" value="1"/>
</dbReference>
<dbReference type="PANTHER" id="PTHR10871:SF1">
    <property type="entry name" value="SMALL RIBOSOMAL SUBUNIT PROTEIN US13M"/>
    <property type="match status" value="1"/>
</dbReference>
<dbReference type="Pfam" id="PF00416">
    <property type="entry name" value="Ribosomal_S13"/>
    <property type="match status" value="1"/>
</dbReference>
<dbReference type="PIRSF" id="PIRSF002134">
    <property type="entry name" value="Ribosomal_S13"/>
    <property type="match status" value="1"/>
</dbReference>
<dbReference type="SUPFAM" id="SSF46946">
    <property type="entry name" value="S13-like H2TH domain"/>
    <property type="match status" value="1"/>
</dbReference>
<dbReference type="PROSITE" id="PS00646">
    <property type="entry name" value="RIBOSOMAL_S13_1"/>
    <property type="match status" value="1"/>
</dbReference>
<dbReference type="PROSITE" id="PS50159">
    <property type="entry name" value="RIBOSOMAL_S13_2"/>
    <property type="match status" value="1"/>
</dbReference>
<evidence type="ECO:0000255" key="1">
    <source>
        <dbReference type="HAMAP-Rule" id="MF_01315"/>
    </source>
</evidence>
<evidence type="ECO:0000256" key="2">
    <source>
        <dbReference type="SAM" id="MobiDB-lite"/>
    </source>
</evidence>
<evidence type="ECO:0000305" key="3"/>
<sequence length="118" mass="13099">MARIAGINIPDHKHAVIALTSIYGVGKTRSKAILAAAGIAEDVKISELSEGQIDTLRDEVAKFVVEGDLRREISMSIKRLMDLGCYRGLRHRRGLPVRGQRTKTNARTRKGPRKPIKK</sequence>